<sequence length="130" mass="14171">MADTQAKDGYYYTEKHEWVKVEGDVALIGITDFAQNALGDIVFIDLPKPGKQIKAKDSLGTIESVKAAEDLYSPISGEVVETNATLGSNPQAVNAEPFDTWMVKLKNIQTSELGGLLTAAQYKEYVSKLD</sequence>
<protein>
    <recommendedName>
        <fullName evidence="1">Glycine cleavage system H protein</fullName>
    </recommendedName>
</protein>
<organism>
    <name type="scientific">Leptospira biflexa serovar Patoc (strain Patoc 1 / ATCC 23582 / Paris)</name>
    <dbReference type="NCBI Taxonomy" id="456481"/>
    <lineage>
        <taxon>Bacteria</taxon>
        <taxon>Pseudomonadati</taxon>
        <taxon>Spirochaetota</taxon>
        <taxon>Spirochaetia</taxon>
        <taxon>Leptospirales</taxon>
        <taxon>Leptospiraceae</taxon>
        <taxon>Leptospira</taxon>
    </lineage>
</organism>
<gene>
    <name evidence="1" type="primary">gcvH</name>
    <name type="ordered locus">LEPBI_I3189</name>
</gene>
<feature type="chain" id="PRO_1000114527" description="Glycine cleavage system H protein">
    <location>
        <begin position="1"/>
        <end position="130"/>
    </location>
</feature>
<feature type="domain" description="Lipoyl-binding" evidence="2">
    <location>
        <begin position="25"/>
        <end position="106"/>
    </location>
</feature>
<feature type="modified residue" description="N6-lipoyllysine" evidence="1">
    <location>
        <position position="66"/>
    </location>
</feature>
<evidence type="ECO:0000255" key="1">
    <source>
        <dbReference type="HAMAP-Rule" id="MF_00272"/>
    </source>
</evidence>
<evidence type="ECO:0000255" key="2">
    <source>
        <dbReference type="PROSITE-ProRule" id="PRU01066"/>
    </source>
</evidence>
<name>GCSH_LEPBP</name>
<dbReference type="EMBL" id="CP000786">
    <property type="protein sequence ID" value="ABZ99254.1"/>
    <property type="molecule type" value="Genomic_DNA"/>
</dbReference>
<dbReference type="RefSeq" id="WP_012390110.1">
    <property type="nucleotide sequence ID" value="NC_010602.1"/>
</dbReference>
<dbReference type="SMR" id="B0SQA2"/>
<dbReference type="STRING" id="456481.LEPBI_I3189"/>
<dbReference type="KEGG" id="lbi:LEPBI_I3189"/>
<dbReference type="HOGENOM" id="CLU_097408_2_2_12"/>
<dbReference type="OrthoDB" id="9796712at2"/>
<dbReference type="BioCyc" id="LBIF456481:LEPBI_RS15610-MONOMER"/>
<dbReference type="Proteomes" id="UP000001847">
    <property type="component" value="Chromosome I"/>
</dbReference>
<dbReference type="GO" id="GO:0005829">
    <property type="term" value="C:cytosol"/>
    <property type="evidence" value="ECO:0007669"/>
    <property type="project" value="TreeGrafter"/>
</dbReference>
<dbReference type="GO" id="GO:0005960">
    <property type="term" value="C:glycine cleavage complex"/>
    <property type="evidence" value="ECO:0007669"/>
    <property type="project" value="InterPro"/>
</dbReference>
<dbReference type="GO" id="GO:0019464">
    <property type="term" value="P:glycine decarboxylation via glycine cleavage system"/>
    <property type="evidence" value="ECO:0007669"/>
    <property type="project" value="UniProtKB-UniRule"/>
</dbReference>
<dbReference type="CDD" id="cd06848">
    <property type="entry name" value="GCS_H"/>
    <property type="match status" value="1"/>
</dbReference>
<dbReference type="Gene3D" id="2.40.50.100">
    <property type="match status" value="1"/>
</dbReference>
<dbReference type="HAMAP" id="MF_00272">
    <property type="entry name" value="GcvH"/>
    <property type="match status" value="1"/>
</dbReference>
<dbReference type="InterPro" id="IPR003016">
    <property type="entry name" value="2-oxoA_DH_lipoyl-BS"/>
</dbReference>
<dbReference type="InterPro" id="IPR000089">
    <property type="entry name" value="Biotin_lipoyl"/>
</dbReference>
<dbReference type="InterPro" id="IPR002930">
    <property type="entry name" value="GCV_H"/>
</dbReference>
<dbReference type="InterPro" id="IPR033753">
    <property type="entry name" value="GCV_H/Fam206"/>
</dbReference>
<dbReference type="InterPro" id="IPR017453">
    <property type="entry name" value="GCV_H_sub"/>
</dbReference>
<dbReference type="InterPro" id="IPR011053">
    <property type="entry name" value="Single_hybrid_motif"/>
</dbReference>
<dbReference type="NCBIfam" id="TIGR00527">
    <property type="entry name" value="gcvH"/>
    <property type="match status" value="1"/>
</dbReference>
<dbReference type="NCBIfam" id="NF002270">
    <property type="entry name" value="PRK01202.1"/>
    <property type="match status" value="1"/>
</dbReference>
<dbReference type="PANTHER" id="PTHR11715">
    <property type="entry name" value="GLYCINE CLEAVAGE SYSTEM H PROTEIN"/>
    <property type="match status" value="1"/>
</dbReference>
<dbReference type="PANTHER" id="PTHR11715:SF3">
    <property type="entry name" value="GLYCINE CLEAVAGE SYSTEM H PROTEIN-RELATED"/>
    <property type="match status" value="1"/>
</dbReference>
<dbReference type="Pfam" id="PF01597">
    <property type="entry name" value="GCV_H"/>
    <property type="match status" value="1"/>
</dbReference>
<dbReference type="SUPFAM" id="SSF51230">
    <property type="entry name" value="Single hybrid motif"/>
    <property type="match status" value="1"/>
</dbReference>
<dbReference type="PROSITE" id="PS50968">
    <property type="entry name" value="BIOTINYL_LIPOYL"/>
    <property type="match status" value="1"/>
</dbReference>
<dbReference type="PROSITE" id="PS00189">
    <property type="entry name" value="LIPOYL"/>
    <property type="match status" value="1"/>
</dbReference>
<reference key="1">
    <citation type="journal article" date="2008" name="PLoS ONE">
        <title>Genome sequence of the saprophyte Leptospira biflexa provides insights into the evolution of Leptospira and the pathogenesis of leptospirosis.</title>
        <authorList>
            <person name="Picardeau M."/>
            <person name="Bulach D.M."/>
            <person name="Bouchier C."/>
            <person name="Zuerner R.L."/>
            <person name="Zidane N."/>
            <person name="Wilson P.J."/>
            <person name="Creno S."/>
            <person name="Kuczek E.S."/>
            <person name="Bommezzadri S."/>
            <person name="Davis J.C."/>
            <person name="McGrath A."/>
            <person name="Johnson M.J."/>
            <person name="Boursaux-Eude C."/>
            <person name="Seemann T."/>
            <person name="Rouy Z."/>
            <person name="Coppel R.L."/>
            <person name="Rood J.I."/>
            <person name="Lajus A."/>
            <person name="Davies J.K."/>
            <person name="Medigue C."/>
            <person name="Adler B."/>
        </authorList>
    </citation>
    <scope>NUCLEOTIDE SEQUENCE [LARGE SCALE GENOMIC DNA]</scope>
    <source>
        <strain>Patoc 1 / ATCC 23582 / Paris</strain>
    </source>
</reference>
<keyword id="KW-0450">Lipoyl</keyword>
<keyword id="KW-1185">Reference proteome</keyword>
<comment type="function">
    <text evidence="1">The glycine cleavage system catalyzes the degradation of glycine. The H protein shuttles the methylamine group of glycine from the P protein to the T protein.</text>
</comment>
<comment type="cofactor">
    <cofactor evidence="1">
        <name>(R)-lipoate</name>
        <dbReference type="ChEBI" id="CHEBI:83088"/>
    </cofactor>
    <text evidence="1">Binds 1 lipoyl cofactor covalently.</text>
</comment>
<comment type="subunit">
    <text evidence="1">The glycine cleavage system is composed of four proteins: P, T, L and H.</text>
</comment>
<comment type="similarity">
    <text evidence="1">Belongs to the GcvH family.</text>
</comment>
<proteinExistence type="inferred from homology"/>
<accession>B0SQA2</accession>